<reference key="1">
    <citation type="journal article" date="2011" name="J. Bacteriol.">
        <title>Comparative genomics of 28 Salmonella enterica isolates: evidence for CRISPR-mediated adaptive sublineage evolution.</title>
        <authorList>
            <person name="Fricke W.F."/>
            <person name="Mammel M.K."/>
            <person name="McDermott P.F."/>
            <person name="Tartera C."/>
            <person name="White D.G."/>
            <person name="Leclerc J.E."/>
            <person name="Ravel J."/>
            <person name="Cebula T.A."/>
        </authorList>
    </citation>
    <scope>NUCLEOTIDE SEQUENCE [LARGE SCALE GENOMIC DNA]</scope>
    <source>
        <strain>SL254</strain>
    </source>
</reference>
<gene>
    <name evidence="1" type="primary">norW</name>
    <name evidence="1" type="synonym">flrR</name>
    <name type="ordered locus">SNSL254_A3043</name>
</gene>
<comment type="function">
    <text evidence="1">One of at least two accessory proteins for anaerobic nitric oxide (NO) reductase. Reduces the rubredoxin moiety of NO reductase.</text>
</comment>
<comment type="catalytic activity">
    <reaction evidence="1">
        <text>2 reduced [nitric oxide reductase rubredoxin domain] + NAD(+) + H(+) = 2 oxidized [nitric oxide reductase rubredoxin domain] + NADH</text>
        <dbReference type="Rhea" id="RHEA:42960"/>
        <dbReference type="Rhea" id="RHEA-COMP:10304"/>
        <dbReference type="Rhea" id="RHEA-COMP:10305"/>
        <dbReference type="ChEBI" id="CHEBI:15378"/>
        <dbReference type="ChEBI" id="CHEBI:29033"/>
        <dbReference type="ChEBI" id="CHEBI:29034"/>
        <dbReference type="ChEBI" id="CHEBI:57540"/>
        <dbReference type="ChEBI" id="CHEBI:57945"/>
    </reaction>
</comment>
<comment type="cofactor">
    <cofactor evidence="1">
        <name>FAD</name>
        <dbReference type="ChEBI" id="CHEBI:57692"/>
    </cofactor>
</comment>
<comment type="pathway">
    <text evidence="1">Nitrogen metabolism; nitric oxide reduction.</text>
</comment>
<comment type="subcellular location">
    <subcellularLocation>
        <location evidence="1">Cytoplasm</location>
    </subcellularLocation>
</comment>
<comment type="similarity">
    <text evidence="1">Belongs to the FAD-dependent oxidoreductase family.</text>
</comment>
<sequence length="377" mass="41148">MSRGIIIIGSGFAARQLVKNIRKQDAHVPLTLIAADSMDEYNKPDLSHVISQSQRADDLTRQLAGEFAEQFNLRLFPHTWVADIDADAHVVKSQDKQWQYDKLVLATGATAFVPPIAGRELMLTLNSQQEYRACETQLRDAQRVLIVGGGLIGSELAMDFCRAGKTVTLMDNAASLLASLMPPEVSSRLQHHLTDMGVHLLLKSQLQKLEKTEAGIRATLVSQHSIEVDAVIAATGLRPETALARRAGVVVNRGVCVDSYLQTSHPDIYAIGDCAEINGQVLPFLQPIQLSAMYLAKNLLGGNAPLKLPAMLVKVKTPELPLHLAGETQRRDLSWQITAESDGMIAKGMSGEGQLRAFVVSEDRMKEAFALLKTLSV</sequence>
<proteinExistence type="inferred from homology"/>
<keyword id="KW-0963">Cytoplasm</keyword>
<keyword id="KW-0274">FAD</keyword>
<keyword id="KW-0285">Flavoprotein</keyword>
<keyword id="KW-0520">NAD</keyword>
<keyword id="KW-0560">Oxidoreductase</keyword>
<feature type="chain" id="PRO_1000141182" description="Nitric oxide reductase FlRd-NAD(+) reductase">
    <location>
        <begin position="1"/>
        <end position="377"/>
    </location>
</feature>
<protein>
    <recommendedName>
        <fullName evidence="1">Nitric oxide reductase FlRd-NAD(+) reductase</fullName>
        <ecNumber evidence="1">1.18.1.-</ecNumber>
    </recommendedName>
    <alternativeName>
        <fullName evidence="1">Flavorubredoxin reductase</fullName>
        <shortName evidence="1">FlRd-reductase</shortName>
        <shortName evidence="1">FlavoRb reductase</shortName>
    </alternativeName>
</protein>
<evidence type="ECO:0000255" key="1">
    <source>
        <dbReference type="HAMAP-Rule" id="MF_01313"/>
    </source>
</evidence>
<dbReference type="EC" id="1.18.1.-" evidence="1"/>
<dbReference type="EMBL" id="CP001113">
    <property type="protein sequence ID" value="ACF62721.1"/>
    <property type="molecule type" value="Genomic_DNA"/>
</dbReference>
<dbReference type="RefSeq" id="WP_000086337.1">
    <property type="nucleotide sequence ID" value="NZ_CCMR01000001.1"/>
</dbReference>
<dbReference type="SMR" id="B4T3B2"/>
<dbReference type="KEGG" id="see:SNSL254_A3043"/>
<dbReference type="HOGENOM" id="CLU_003291_4_4_6"/>
<dbReference type="UniPathway" id="UPA00638"/>
<dbReference type="Proteomes" id="UP000008824">
    <property type="component" value="Chromosome"/>
</dbReference>
<dbReference type="GO" id="GO:0005737">
    <property type="term" value="C:cytoplasm"/>
    <property type="evidence" value="ECO:0007669"/>
    <property type="project" value="UniProtKB-SubCell"/>
</dbReference>
<dbReference type="GO" id="GO:0016731">
    <property type="term" value="F:oxidoreductase activity, acting on iron-sulfur proteins as donors, NAD or NADP as acceptor"/>
    <property type="evidence" value="ECO:0007669"/>
    <property type="project" value="UniProtKB-UniRule"/>
</dbReference>
<dbReference type="Gene3D" id="3.30.390.120">
    <property type="match status" value="1"/>
</dbReference>
<dbReference type="Gene3D" id="3.50.50.60">
    <property type="entry name" value="FAD/NAD(P)-binding domain"/>
    <property type="match status" value="2"/>
</dbReference>
<dbReference type="HAMAP" id="MF_01313">
    <property type="entry name" value="NorW"/>
    <property type="match status" value="1"/>
</dbReference>
<dbReference type="InterPro" id="IPR050260">
    <property type="entry name" value="FAD-bd_OxRdtase"/>
</dbReference>
<dbReference type="InterPro" id="IPR036188">
    <property type="entry name" value="FAD/NAD-bd_sf"/>
</dbReference>
<dbReference type="InterPro" id="IPR023753">
    <property type="entry name" value="FAD/NAD-binding_dom"/>
</dbReference>
<dbReference type="InterPro" id="IPR023961">
    <property type="entry name" value="NO_rdtase_NorW"/>
</dbReference>
<dbReference type="InterPro" id="IPR041364">
    <property type="entry name" value="Rbx-bd"/>
</dbReference>
<dbReference type="NCBIfam" id="NF003437">
    <property type="entry name" value="PRK04965.1"/>
    <property type="match status" value="1"/>
</dbReference>
<dbReference type="PANTHER" id="PTHR43429:SF3">
    <property type="entry name" value="NITRITE REDUCTASE [NAD(P)H]"/>
    <property type="match status" value="1"/>
</dbReference>
<dbReference type="PANTHER" id="PTHR43429">
    <property type="entry name" value="PYRIDINE NUCLEOTIDE-DISULFIDE OXIDOREDUCTASE DOMAIN-CONTAINING"/>
    <property type="match status" value="1"/>
</dbReference>
<dbReference type="Pfam" id="PF07992">
    <property type="entry name" value="Pyr_redox_2"/>
    <property type="match status" value="1"/>
</dbReference>
<dbReference type="Pfam" id="PF18113">
    <property type="entry name" value="Rbx_binding"/>
    <property type="match status" value="1"/>
</dbReference>
<dbReference type="PRINTS" id="PR00368">
    <property type="entry name" value="FADPNR"/>
</dbReference>
<dbReference type="PRINTS" id="PR00411">
    <property type="entry name" value="PNDRDTASEI"/>
</dbReference>
<dbReference type="SUPFAM" id="SSF51905">
    <property type="entry name" value="FAD/NAD(P)-binding domain"/>
    <property type="match status" value="1"/>
</dbReference>
<organism>
    <name type="scientific">Salmonella newport (strain SL254)</name>
    <dbReference type="NCBI Taxonomy" id="423368"/>
    <lineage>
        <taxon>Bacteria</taxon>
        <taxon>Pseudomonadati</taxon>
        <taxon>Pseudomonadota</taxon>
        <taxon>Gammaproteobacteria</taxon>
        <taxon>Enterobacterales</taxon>
        <taxon>Enterobacteriaceae</taxon>
        <taxon>Salmonella</taxon>
    </lineage>
</organism>
<accession>B4T3B2</accession>
<name>NORW_SALNS</name>